<protein>
    <recommendedName>
        <fullName>Probable boron transporter 7</fullName>
    </recommendedName>
</protein>
<accession>Q9SUU1</accession>
<accession>D5LUP6</accession>
<feature type="chain" id="PRO_0000079242" description="Probable boron transporter 7">
    <location>
        <begin position="1"/>
        <end position="673"/>
    </location>
</feature>
<feature type="topological domain" description="Cytoplasmic" evidence="2">
    <location>
        <begin position="1"/>
        <end position="35"/>
    </location>
</feature>
<feature type="transmembrane region" description="Helical" evidence="2">
    <location>
        <begin position="36"/>
        <end position="56"/>
    </location>
</feature>
<feature type="topological domain" description="Extracellular" evidence="2">
    <location>
        <begin position="57"/>
        <end position="75"/>
    </location>
</feature>
<feature type="transmembrane region" description="Helical" evidence="2">
    <location>
        <begin position="76"/>
        <end position="96"/>
    </location>
</feature>
<feature type="topological domain" description="Cytoplasmic" evidence="2">
    <location>
        <begin position="97"/>
        <end position="121"/>
    </location>
</feature>
<feature type="transmembrane region" description="Helical" evidence="2">
    <location>
        <begin position="122"/>
        <end position="142"/>
    </location>
</feature>
<feature type="topological domain" description="Extracellular" evidence="2">
    <location>
        <begin position="143"/>
        <end position="160"/>
    </location>
</feature>
<feature type="transmembrane region" description="Helical" evidence="2">
    <location>
        <begin position="161"/>
        <end position="181"/>
    </location>
</feature>
<feature type="topological domain" description="Cytoplasmic" evidence="2">
    <location>
        <begin position="182"/>
        <end position="197"/>
    </location>
</feature>
<feature type="transmembrane region" description="Helical" evidence="2">
    <location>
        <begin position="198"/>
        <end position="218"/>
    </location>
</feature>
<feature type="topological domain" description="Extracellular" evidence="2">
    <location>
        <begin position="219"/>
        <end position="233"/>
    </location>
</feature>
<feature type="transmembrane region" description="Helical" evidence="2">
    <location>
        <begin position="234"/>
        <end position="254"/>
    </location>
</feature>
<feature type="topological domain" description="Cytoplasmic" evidence="2">
    <location>
        <begin position="255"/>
        <end position="289"/>
    </location>
</feature>
<feature type="transmembrane region" description="Helical" evidence="2">
    <location>
        <begin position="290"/>
        <end position="310"/>
    </location>
</feature>
<feature type="topological domain" description="Extracellular" evidence="2">
    <location>
        <begin position="311"/>
        <end position="330"/>
    </location>
</feature>
<feature type="transmembrane region" description="Helical" evidence="2">
    <location>
        <begin position="331"/>
        <end position="351"/>
    </location>
</feature>
<feature type="topological domain" description="Cytoplasmic" evidence="2">
    <location>
        <begin position="352"/>
        <end position="468"/>
    </location>
</feature>
<feature type="transmembrane region" description="Helical" evidence="2">
    <location>
        <begin position="469"/>
        <end position="489"/>
    </location>
</feature>
<feature type="topological domain" description="Extracellular" evidence="2">
    <location>
        <begin position="490"/>
        <end position="556"/>
    </location>
</feature>
<feature type="transmembrane region" description="Helical" evidence="2">
    <location>
        <begin position="557"/>
        <end position="577"/>
    </location>
</feature>
<feature type="topological domain" description="Cytoplasmic" evidence="2">
    <location>
        <begin position="578"/>
        <end position="673"/>
    </location>
</feature>
<evidence type="ECO:0000250" key="1"/>
<evidence type="ECO:0000255" key="2"/>
<evidence type="ECO:0000305" key="3"/>
<reference key="1">
    <citation type="submission" date="2010-03" db="EMBL/GenBank/DDBJ databases">
        <title>Roles of Arabidopsis BOR2, an efflux-type boron transporter, in root elongation under conditions of boron limitation.</title>
        <authorList>
            <person name="Miwa K."/>
            <person name="Fujiwara T."/>
        </authorList>
    </citation>
    <scope>NUCLEOTIDE SEQUENCE [MRNA]</scope>
</reference>
<reference key="2">
    <citation type="journal article" date="1999" name="Nature">
        <title>Sequence and analysis of chromosome 4 of the plant Arabidopsis thaliana.</title>
        <authorList>
            <person name="Mayer K.F.X."/>
            <person name="Schueller C."/>
            <person name="Wambutt R."/>
            <person name="Murphy G."/>
            <person name="Volckaert G."/>
            <person name="Pohl T."/>
            <person name="Duesterhoeft A."/>
            <person name="Stiekema W."/>
            <person name="Entian K.-D."/>
            <person name="Terryn N."/>
            <person name="Harris B."/>
            <person name="Ansorge W."/>
            <person name="Brandt P."/>
            <person name="Grivell L.A."/>
            <person name="Rieger M."/>
            <person name="Weichselgartner M."/>
            <person name="de Simone V."/>
            <person name="Obermaier B."/>
            <person name="Mache R."/>
            <person name="Mueller M."/>
            <person name="Kreis M."/>
            <person name="Delseny M."/>
            <person name="Puigdomenech P."/>
            <person name="Watson M."/>
            <person name="Schmidtheini T."/>
            <person name="Reichert B."/>
            <person name="Portetelle D."/>
            <person name="Perez-Alonso M."/>
            <person name="Boutry M."/>
            <person name="Bancroft I."/>
            <person name="Vos P."/>
            <person name="Hoheisel J."/>
            <person name="Zimmermann W."/>
            <person name="Wedler H."/>
            <person name="Ridley P."/>
            <person name="Langham S.-A."/>
            <person name="McCullagh B."/>
            <person name="Bilham L."/>
            <person name="Robben J."/>
            <person name="van der Schueren J."/>
            <person name="Grymonprez B."/>
            <person name="Chuang Y.-J."/>
            <person name="Vandenbussche F."/>
            <person name="Braeken M."/>
            <person name="Weltjens I."/>
            <person name="Voet M."/>
            <person name="Bastiaens I."/>
            <person name="Aert R."/>
            <person name="Defoor E."/>
            <person name="Weitzenegger T."/>
            <person name="Bothe G."/>
            <person name="Ramsperger U."/>
            <person name="Hilbert H."/>
            <person name="Braun M."/>
            <person name="Holzer E."/>
            <person name="Brandt A."/>
            <person name="Peters S."/>
            <person name="van Staveren M."/>
            <person name="Dirkse W."/>
            <person name="Mooijman P."/>
            <person name="Klein Lankhorst R."/>
            <person name="Rose M."/>
            <person name="Hauf J."/>
            <person name="Koetter P."/>
            <person name="Berneiser S."/>
            <person name="Hempel S."/>
            <person name="Feldpausch M."/>
            <person name="Lamberth S."/>
            <person name="Van den Daele H."/>
            <person name="De Keyser A."/>
            <person name="Buysshaert C."/>
            <person name="Gielen J."/>
            <person name="Villarroel R."/>
            <person name="De Clercq R."/>
            <person name="van Montagu M."/>
            <person name="Rogers J."/>
            <person name="Cronin A."/>
            <person name="Quail M.A."/>
            <person name="Bray-Allen S."/>
            <person name="Clark L."/>
            <person name="Doggett J."/>
            <person name="Hall S."/>
            <person name="Kay M."/>
            <person name="Lennard N."/>
            <person name="McLay K."/>
            <person name="Mayes R."/>
            <person name="Pettett A."/>
            <person name="Rajandream M.A."/>
            <person name="Lyne M."/>
            <person name="Benes V."/>
            <person name="Rechmann S."/>
            <person name="Borkova D."/>
            <person name="Bloecker H."/>
            <person name="Scharfe M."/>
            <person name="Grimm M."/>
            <person name="Loehnert T.-H."/>
            <person name="Dose S."/>
            <person name="de Haan M."/>
            <person name="Maarse A.C."/>
            <person name="Schaefer M."/>
            <person name="Mueller-Auer S."/>
            <person name="Gabel C."/>
            <person name="Fuchs M."/>
            <person name="Fartmann B."/>
            <person name="Granderath K."/>
            <person name="Dauner D."/>
            <person name="Herzl A."/>
            <person name="Neumann S."/>
            <person name="Argiriou A."/>
            <person name="Vitale D."/>
            <person name="Liguori R."/>
            <person name="Piravandi E."/>
            <person name="Massenet O."/>
            <person name="Quigley F."/>
            <person name="Clabauld G."/>
            <person name="Muendlein A."/>
            <person name="Felber R."/>
            <person name="Schnabl S."/>
            <person name="Hiller R."/>
            <person name="Schmidt W."/>
            <person name="Lecharny A."/>
            <person name="Aubourg S."/>
            <person name="Chefdor F."/>
            <person name="Cooke R."/>
            <person name="Berger C."/>
            <person name="Monfort A."/>
            <person name="Casacuberta E."/>
            <person name="Gibbons T."/>
            <person name="Weber N."/>
            <person name="Vandenbol M."/>
            <person name="Bargues M."/>
            <person name="Terol J."/>
            <person name="Torres A."/>
            <person name="Perez-Perez A."/>
            <person name="Purnelle B."/>
            <person name="Bent E."/>
            <person name="Johnson S."/>
            <person name="Tacon D."/>
            <person name="Jesse T."/>
            <person name="Heijnen L."/>
            <person name="Schwarz S."/>
            <person name="Scholler P."/>
            <person name="Heber S."/>
            <person name="Francs P."/>
            <person name="Bielke C."/>
            <person name="Frishman D."/>
            <person name="Haase D."/>
            <person name="Lemcke K."/>
            <person name="Mewes H.-W."/>
            <person name="Stocker S."/>
            <person name="Zaccaria P."/>
            <person name="Bevan M."/>
            <person name="Wilson R.K."/>
            <person name="de la Bastide M."/>
            <person name="Habermann K."/>
            <person name="Parnell L."/>
            <person name="Dedhia N."/>
            <person name="Gnoj L."/>
            <person name="Schutz K."/>
            <person name="Huang E."/>
            <person name="Spiegel L."/>
            <person name="Sekhon M."/>
            <person name="Murray J."/>
            <person name="Sheet P."/>
            <person name="Cordes M."/>
            <person name="Abu-Threideh J."/>
            <person name="Stoneking T."/>
            <person name="Kalicki J."/>
            <person name="Graves T."/>
            <person name="Harmon G."/>
            <person name="Edwards J."/>
            <person name="Latreille P."/>
            <person name="Courtney L."/>
            <person name="Cloud J."/>
            <person name="Abbott A."/>
            <person name="Scott K."/>
            <person name="Johnson D."/>
            <person name="Minx P."/>
            <person name="Bentley D."/>
            <person name="Fulton B."/>
            <person name="Miller N."/>
            <person name="Greco T."/>
            <person name="Kemp K."/>
            <person name="Kramer J."/>
            <person name="Fulton L."/>
            <person name="Mardis E."/>
            <person name="Dante M."/>
            <person name="Pepin K."/>
            <person name="Hillier L.W."/>
            <person name="Nelson J."/>
            <person name="Spieth J."/>
            <person name="Ryan E."/>
            <person name="Andrews S."/>
            <person name="Geisel C."/>
            <person name="Layman D."/>
            <person name="Du H."/>
            <person name="Ali J."/>
            <person name="Berghoff A."/>
            <person name="Jones K."/>
            <person name="Drone K."/>
            <person name="Cotton M."/>
            <person name="Joshu C."/>
            <person name="Antonoiu B."/>
            <person name="Zidanic M."/>
            <person name="Strong C."/>
            <person name="Sun H."/>
            <person name="Lamar B."/>
            <person name="Yordan C."/>
            <person name="Ma P."/>
            <person name="Zhong J."/>
            <person name="Preston R."/>
            <person name="Vil D."/>
            <person name="Shekher M."/>
            <person name="Matero A."/>
            <person name="Shah R."/>
            <person name="Swaby I.K."/>
            <person name="O'Shaughnessy A."/>
            <person name="Rodriguez M."/>
            <person name="Hoffman J."/>
            <person name="Till S."/>
            <person name="Granat S."/>
            <person name="Shohdy N."/>
            <person name="Hasegawa A."/>
            <person name="Hameed A."/>
            <person name="Lodhi M."/>
            <person name="Johnson A."/>
            <person name="Chen E."/>
            <person name="Marra M.A."/>
            <person name="Martienssen R."/>
            <person name="McCombie W.R."/>
        </authorList>
    </citation>
    <scope>NUCLEOTIDE SEQUENCE [LARGE SCALE GENOMIC DNA]</scope>
    <source>
        <strain>cv. Columbia</strain>
    </source>
</reference>
<reference key="3">
    <citation type="journal article" date="2017" name="Plant J.">
        <title>Araport11: a complete reannotation of the Arabidopsis thaliana reference genome.</title>
        <authorList>
            <person name="Cheng C.Y."/>
            <person name="Krishnakumar V."/>
            <person name="Chan A.P."/>
            <person name="Thibaud-Nissen F."/>
            <person name="Schobel S."/>
            <person name="Town C.D."/>
        </authorList>
    </citation>
    <scope>GENOME REANNOTATION</scope>
    <source>
        <strain>cv. Columbia</strain>
    </source>
</reference>
<keyword id="KW-0039">Anion exchange</keyword>
<keyword id="KW-0406">Ion transport</keyword>
<keyword id="KW-0472">Membrane</keyword>
<keyword id="KW-1185">Reference proteome</keyword>
<keyword id="KW-0812">Transmembrane</keyword>
<keyword id="KW-1133">Transmembrane helix</keyword>
<keyword id="KW-0813">Transport</keyword>
<sequence length="673" mass="76282">MEGVKFPFGGIINDFNGRRKCYKQDWLAAFNSGVRILAPTLYIFIASALPVIAFGEQLSRETDRSLGIAESLASTALCGIIHSVFGGQPLLIVGVAEPTIIMYTYLHSFSKSRPELGQKLYLAWAGWVCVWTAVLLMLLAMLNACNIISRFTRIAGELFGMLITVLFIQEAVKGLIGEFLVPKSDDPSLEVYQFQWRYTNGLLAVIFSFGLLYTALKSRRARSWKYGFRWMRGFIGDYGTLLMLVLWSAFSYTVPRNLPEGVPRRLELPLPWASESLYHWTVVKDMAKVPPLYILAAFIPAIMIAGLYFFDHCVSAQMAQQKEFNLKNPTAYHYDIFILGIMTLICGLLGLPPSNGVIPQSPMHTKSLAVLKKQQMRKKMVQKAKECMREKASNSEIYGRMQDVFIEMETSPKATSVVKELENLKEAVMKADDGGGETKGKKFDPEVHIEDHLPVRVNEQRVSNLLQSVLVGLLILAVPVLRMIPTSVLWGYFTYMAVDSLPGNQFWERLQLLFITPGRRFKVLEGLHASFVEIVPYKSIVMFTLFQLLYFLICYGVTWIPVGGILFPLPFFILIALRQYILQRLFDPSHLQVLDSSEYEEMVGAPQRNSSFGFNGELREAHNIPLSVVENSEDEFYDAEILDEITTSRGELKHRTLSVKEDRSQMVKIYNHS</sequence>
<gene>
    <name type="primary">BOR7</name>
    <name type="ordered locus">At4g32510</name>
    <name type="ORF">F8B4.210</name>
</gene>
<dbReference type="EMBL" id="GU971378">
    <property type="protein sequence ID" value="ADF49546.1"/>
    <property type="molecule type" value="mRNA"/>
</dbReference>
<dbReference type="EMBL" id="AL034567">
    <property type="protein sequence ID" value="CAA22578.1"/>
    <property type="status" value="ALT_SEQ"/>
    <property type="molecule type" value="Genomic_DNA"/>
</dbReference>
<dbReference type="EMBL" id="AL161581">
    <property type="protein sequence ID" value="CAB79968.1"/>
    <property type="status" value="ALT_SEQ"/>
    <property type="molecule type" value="Genomic_DNA"/>
</dbReference>
<dbReference type="EMBL" id="CP002687">
    <property type="protein sequence ID" value="AEE86070.1"/>
    <property type="molecule type" value="Genomic_DNA"/>
</dbReference>
<dbReference type="PIR" id="T05361">
    <property type="entry name" value="T05361"/>
</dbReference>
<dbReference type="RefSeq" id="NP_194977.6">
    <property type="nucleotide sequence ID" value="NM_119403.6"/>
</dbReference>
<dbReference type="SMR" id="Q9SUU1"/>
<dbReference type="FunCoup" id="Q9SUU1">
    <property type="interactions" value="405"/>
</dbReference>
<dbReference type="STRING" id="3702.Q9SUU1"/>
<dbReference type="PaxDb" id="3702-AT4G32510.1"/>
<dbReference type="EnsemblPlants" id="AT4G32510.1">
    <property type="protein sequence ID" value="AT4G32510.1"/>
    <property type="gene ID" value="AT4G32510"/>
</dbReference>
<dbReference type="GeneID" id="829386"/>
<dbReference type="Gramene" id="AT4G32510.1">
    <property type="protein sequence ID" value="AT4G32510.1"/>
    <property type="gene ID" value="AT4G32510"/>
</dbReference>
<dbReference type="KEGG" id="ath:AT4G32510"/>
<dbReference type="Araport" id="AT4G32510"/>
<dbReference type="TAIR" id="AT4G32510"/>
<dbReference type="eggNOG" id="KOG1172">
    <property type="taxonomic scope" value="Eukaryota"/>
</dbReference>
<dbReference type="HOGENOM" id="CLU_002289_3_2_1"/>
<dbReference type="InParanoid" id="Q9SUU1"/>
<dbReference type="OrthoDB" id="1735926at2759"/>
<dbReference type="PhylomeDB" id="Q9SUU1"/>
<dbReference type="PRO" id="PR:Q9SUU1"/>
<dbReference type="Proteomes" id="UP000006548">
    <property type="component" value="Chromosome 4"/>
</dbReference>
<dbReference type="ExpressionAtlas" id="Q9SUU1">
    <property type="expression patterns" value="baseline and differential"/>
</dbReference>
<dbReference type="GO" id="GO:0016020">
    <property type="term" value="C:membrane"/>
    <property type="evidence" value="ECO:0007669"/>
    <property type="project" value="UniProtKB-SubCell"/>
</dbReference>
<dbReference type="GO" id="GO:0005452">
    <property type="term" value="F:solute:inorganic anion antiporter activity"/>
    <property type="evidence" value="ECO:0007669"/>
    <property type="project" value="InterPro"/>
</dbReference>
<dbReference type="GO" id="GO:0006820">
    <property type="term" value="P:monoatomic anion transport"/>
    <property type="evidence" value="ECO:0007669"/>
    <property type="project" value="InterPro"/>
</dbReference>
<dbReference type="FunFam" id="1.10.287.570:FF:000004">
    <property type="entry name" value="probable boron transporter 2"/>
    <property type="match status" value="1"/>
</dbReference>
<dbReference type="Gene3D" id="1.10.287.570">
    <property type="entry name" value="Helical hairpin bin"/>
    <property type="match status" value="1"/>
</dbReference>
<dbReference type="InterPro" id="IPR011531">
    <property type="entry name" value="HCO3_transpt-like_TM_dom"/>
</dbReference>
<dbReference type="InterPro" id="IPR003020">
    <property type="entry name" value="HCO3_transpt_euk"/>
</dbReference>
<dbReference type="PANTHER" id="PTHR11453">
    <property type="entry name" value="ANION EXCHANGE PROTEIN"/>
    <property type="match status" value="1"/>
</dbReference>
<dbReference type="PANTHER" id="PTHR11453:SF131">
    <property type="entry name" value="BORON TRANSPORTER 7-RELATED"/>
    <property type="match status" value="1"/>
</dbReference>
<dbReference type="Pfam" id="PF00955">
    <property type="entry name" value="HCO3_cotransp"/>
    <property type="match status" value="3"/>
</dbReference>
<proteinExistence type="evidence at transcript level"/>
<name>BOR7_ARATH</name>
<organism>
    <name type="scientific">Arabidopsis thaliana</name>
    <name type="common">Mouse-ear cress</name>
    <dbReference type="NCBI Taxonomy" id="3702"/>
    <lineage>
        <taxon>Eukaryota</taxon>
        <taxon>Viridiplantae</taxon>
        <taxon>Streptophyta</taxon>
        <taxon>Embryophyta</taxon>
        <taxon>Tracheophyta</taxon>
        <taxon>Spermatophyta</taxon>
        <taxon>Magnoliopsida</taxon>
        <taxon>eudicotyledons</taxon>
        <taxon>Gunneridae</taxon>
        <taxon>Pentapetalae</taxon>
        <taxon>rosids</taxon>
        <taxon>malvids</taxon>
        <taxon>Brassicales</taxon>
        <taxon>Brassicaceae</taxon>
        <taxon>Camelineae</taxon>
        <taxon>Arabidopsis</taxon>
    </lineage>
</organism>
<comment type="function">
    <text evidence="1">Putative boron transporter. Boron is essential for maintaining the integrity of plants cell walls (By similarity).</text>
</comment>
<comment type="subcellular location">
    <subcellularLocation>
        <location evidence="1">Membrane</location>
        <topology evidence="1">Multi-pass membrane protein</topology>
    </subcellularLocation>
</comment>
<comment type="similarity">
    <text evidence="3">Belongs to the anion exchanger (TC 2.A.31.3) family.</text>
</comment>
<comment type="sequence caution" evidence="3">
    <conflict type="erroneous gene model prediction">
        <sequence resource="EMBL-CDS" id="CAA22578"/>
    </conflict>
</comment>
<comment type="sequence caution" evidence="3">
    <conflict type="erroneous gene model prediction">
        <sequence resource="EMBL-CDS" id="CAB79968"/>
    </conflict>
</comment>